<accession>Q5HDP9</accession>
<dbReference type="EC" id="1.17.1.9"/>
<dbReference type="EMBL" id="CP000046">
    <property type="protein sequence ID" value="AAW38521.1"/>
    <property type="molecule type" value="Genomic_DNA"/>
</dbReference>
<dbReference type="SMR" id="Q5HDP9"/>
<dbReference type="KEGG" id="sac:SACOL2301"/>
<dbReference type="HOGENOM" id="CLU_000422_2_1_9"/>
<dbReference type="Proteomes" id="UP000000530">
    <property type="component" value="Chromosome"/>
</dbReference>
<dbReference type="GO" id="GO:0016020">
    <property type="term" value="C:membrane"/>
    <property type="evidence" value="ECO:0007669"/>
    <property type="project" value="TreeGrafter"/>
</dbReference>
<dbReference type="GO" id="GO:0051537">
    <property type="term" value="F:2 iron, 2 sulfur cluster binding"/>
    <property type="evidence" value="ECO:0007669"/>
    <property type="project" value="UniProtKB-KW"/>
</dbReference>
<dbReference type="GO" id="GO:0051539">
    <property type="term" value="F:4 iron, 4 sulfur cluster binding"/>
    <property type="evidence" value="ECO:0007669"/>
    <property type="project" value="UniProtKB-KW"/>
</dbReference>
<dbReference type="GO" id="GO:0008863">
    <property type="term" value="F:formate dehydrogenase (NAD+) activity"/>
    <property type="evidence" value="ECO:0007669"/>
    <property type="project" value="UniProtKB-EC"/>
</dbReference>
<dbReference type="GO" id="GO:0046872">
    <property type="term" value="F:metal ion binding"/>
    <property type="evidence" value="ECO:0007669"/>
    <property type="project" value="UniProtKB-KW"/>
</dbReference>
<dbReference type="GO" id="GO:0043546">
    <property type="term" value="F:molybdopterin cofactor binding"/>
    <property type="evidence" value="ECO:0007669"/>
    <property type="project" value="InterPro"/>
</dbReference>
<dbReference type="GO" id="GO:0003954">
    <property type="term" value="F:NADH dehydrogenase activity"/>
    <property type="evidence" value="ECO:0007669"/>
    <property type="project" value="TreeGrafter"/>
</dbReference>
<dbReference type="GO" id="GO:0015942">
    <property type="term" value="P:formate metabolic process"/>
    <property type="evidence" value="ECO:0007669"/>
    <property type="project" value="InterPro"/>
</dbReference>
<dbReference type="GO" id="GO:0022904">
    <property type="term" value="P:respiratory electron transport chain"/>
    <property type="evidence" value="ECO:0007669"/>
    <property type="project" value="TreeGrafter"/>
</dbReference>
<dbReference type="CDD" id="cd00207">
    <property type="entry name" value="fer2"/>
    <property type="match status" value="1"/>
</dbReference>
<dbReference type="CDD" id="cd02792">
    <property type="entry name" value="MopB_CT_Formate-Dh-Na-like"/>
    <property type="match status" value="1"/>
</dbReference>
<dbReference type="CDD" id="cd02753">
    <property type="entry name" value="MopB_Formate-Dh-H"/>
    <property type="match status" value="1"/>
</dbReference>
<dbReference type="FunFam" id="2.20.25.90:FF:000001">
    <property type="entry name" value="Formate dehydrogenase subunit alpha"/>
    <property type="match status" value="1"/>
</dbReference>
<dbReference type="FunFam" id="3.10.20.740:FF:000003">
    <property type="entry name" value="Formate dehydrogenase subunit alpha"/>
    <property type="match status" value="1"/>
</dbReference>
<dbReference type="FunFam" id="3.40.228.10:FF:000002">
    <property type="entry name" value="Formate dehydrogenase subunit alpha"/>
    <property type="match status" value="1"/>
</dbReference>
<dbReference type="FunFam" id="3.30.70.20:FF:000032">
    <property type="entry name" value="Formate dehydrogenase, alpha subunit"/>
    <property type="match status" value="1"/>
</dbReference>
<dbReference type="FunFam" id="2.40.40.20:FF:000005">
    <property type="entry name" value="Periplasmic nitrate reductase"/>
    <property type="match status" value="1"/>
</dbReference>
<dbReference type="Gene3D" id="2.40.40.20">
    <property type="match status" value="1"/>
</dbReference>
<dbReference type="Gene3D" id="3.10.20.740">
    <property type="match status" value="1"/>
</dbReference>
<dbReference type="Gene3D" id="3.30.70.20">
    <property type="match status" value="1"/>
</dbReference>
<dbReference type="Gene3D" id="3.40.50.740">
    <property type="match status" value="1"/>
</dbReference>
<dbReference type="Gene3D" id="2.20.25.90">
    <property type="entry name" value="ADC-like domains"/>
    <property type="match status" value="1"/>
</dbReference>
<dbReference type="Gene3D" id="3.40.228.10">
    <property type="entry name" value="Dimethylsulfoxide Reductase, domain 2"/>
    <property type="match status" value="1"/>
</dbReference>
<dbReference type="InterPro" id="IPR036010">
    <property type="entry name" value="2Fe-2S_ferredoxin-like_sf"/>
</dbReference>
<dbReference type="InterPro" id="IPR001041">
    <property type="entry name" value="2Fe-2S_ferredoxin-type"/>
</dbReference>
<dbReference type="InterPro" id="IPR017896">
    <property type="entry name" value="4Fe4S_Fe-S-bd"/>
</dbReference>
<dbReference type="InterPro" id="IPR017900">
    <property type="entry name" value="4Fe4S_Fe_S_CS"/>
</dbReference>
<dbReference type="InterPro" id="IPR009010">
    <property type="entry name" value="Asp_de-COase-like_dom_sf"/>
</dbReference>
<dbReference type="InterPro" id="IPR041924">
    <property type="entry name" value="Formate_Dh-H_N"/>
</dbReference>
<dbReference type="InterPro" id="IPR006478">
    <property type="entry name" value="Formate_DH_asu"/>
</dbReference>
<dbReference type="InterPro" id="IPR006657">
    <property type="entry name" value="MoPterin_dinucl-bd_dom"/>
</dbReference>
<dbReference type="InterPro" id="IPR006656">
    <property type="entry name" value="Mopterin_OxRdtase"/>
</dbReference>
<dbReference type="InterPro" id="IPR006963">
    <property type="entry name" value="Mopterin_OxRdtase_4Fe-4S_dom"/>
</dbReference>
<dbReference type="InterPro" id="IPR006655">
    <property type="entry name" value="Mopterin_OxRdtase_prok_CS"/>
</dbReference>
<dbReference type="InterPro" id="IPR027467">
    <property type="entry name" value="MopterinOxRdtase_cofactor_BS"/>
</dbReference>
<dbReference type="InterPro" id="IPR019574">
    <property type="entry name" value="NADH_UbQ_OxRdtase_Gsu_4Fe4S-bd"/>
</dbReference>
<dbReference type="InterPro" id="IPR050123">
    <property type="entry name" value="Prok_molybdopt-oxidoreductase"/>
</dbReference>
<dbReference type="NCBIfam" id="TIGR01591">
    <property type="entry name" value="Fdh-alpha"/>
    <property type="match status" value="1"/>
</dbReference>
<dbReference type="PANTHER" id="PTHR43105:SF14">
    <property type="entry name" value="FORMATE DEHYDROGENASE H"/>
    <property type="match status" value="1"/>
</dbReference>
<dbReference type="PANTHER" id="PTHR43105">
    <property type="entry name" value="RESPIRATORY NITRATE REDUCTASE"/>
    <property type="match status" value="1"/>
</dbReference>
<dbReference type="Pfam" id="PF13510">
    <property type="entry name" value="Fer2_4"/>
    <property type="match status" value="1"/>
</dbReference>
<dbReference type="Pfam" id="PF12838">
    <property type="entry name" value="Fer4_7"/>
    <property type="match status" value="1"/>
</dbReference>
<dbReference type="Pfam" id="PF04879">
    <property type="entry name" value="Molybdop_Fe4S4"/>
    <property type="match status" value="1"/>
</dbReference>
<dbReference type="Pfam" id="PF00384">
    <property type="entry name" value="Molybdopterin"/>
    <property type="match status" value="1"/>
</dbReference>
<dbReference type="Pfam" id="PF01568">
    <property type="entry name" value="Molydop_binding"/>
    <property type="match status" value="1"/>
</dbReference>
<dbReference type="Pfam" id="PF10588">
    <property type="entry name" value="NADH-G_4Fe-4S_3"/>
    <property type="match status" value="1"/>
</dbReference>
<dbReference type="PIRSF" id="PIRSF036643">
    <property type="entry name" value="FDH_alpha"/>
    <property type="match status" value="1"/>
</dbReference>
<dbReference type="SMART" id="SM00926">
    <property type="entry name" value="Molybdop_Fe4S4"/>
    <property type="match status" value="1"/>
</dbReference>
<dbReference type="SMART" id="SM00929">
    <property type="entry name" value="NADH-G_4Fe-4S_3"/>
    <property type="match status" value="1"/>
</dbReference>
<dbReference type="SUPFAM" id="SSF54292">
    <property type="entry name" value="2Fe-2S ferredoxin-like"/>
    <property type="match status" value="1"/>
</dbReference>
<dbReference type="SUPFAM" id="SSF54862">
    <property type="entry name" value="4Fe-4S ferredoxins"/>
    <property type="match status" value="1"/>
</dbReference>
<dbReference type="SUPFAM" id="SSF50692">
    <property type="entry name" value="ADC-like"/>
    <property type="match status" value="1"/>
</dbReference>
<dbReference type="SUPFAM" id="SSF53706">
    <property type="entry name" value="Formate dehydrogenase/DMSO reductase, domains 1-3"/>
    <property type="match status" value="1"/>
</dbReference>
<dbReference type="PROSITE" id="PS51085">
    <property type="entry name" value="2FE2S_FER_2"/>
    <property type="match status" value="1"/>
</dbReference>
<dbReference type="PROSITE" id="PS00198">
    <property type="entry name" value="4FE4S_FER_1"/>
    <property type="match status" value="1"/>
</dbReference>
<dbReference type="PROSITE" id="PS51379">
    <property type="entry name" value="4FE4S_FER_2"/>
    <property type="match status" value="2"/>
</dbReference>
<dbReference type="PROSITE" id="PS51839">
    <property type="entry name" value="4FE4S_HC3"/>
    <property type="match status" value="1"/>
</dbReference>
<dbReference type="PROSITE" id="PS51669">
    <property type="entry name" value="4FE4S_MOW_BIS_MGD"/>
    <property type="match status" value="1"/>
</dbReference>
<dbReference type="PROSITE" id="PS00551">
    <property type="entry name" value="MOLYBDOPTERIN_PROK_1"/>
    <property type="match status" value="1"/>
</dbReference>
<dbReference type="PROSITE" id="PS00932">
    <property type="entry name" value="MOLYBDOPTERIN_PROK_3"/>
    <property type="match status" value="1"/>
</dbReference>
<reference key="1">
    <citation type="journal article" date="2005" name="J. Bacteriol.">
        <title>Insights on evolution of virulence and resistance from the complete genome analysis of an early methicillin-resistant Staphylococcus aureus strain and a biofilm-producing methicillin-resistant Staphylococcus epidermidis strain.</title>
        <authorList>
            <person name="Gill S.R."/>
            <person name="Fouts D.E."/>
            <person name="Archer G.L."/>
            <person name="Mongodin E.F."/>
            <person name="DeBoy R.T."/>
            <person name="Ravel J."/>
            <person name="Paulsen I.T."/>
            <person name="Kolonay J.F."/>
            <person name="Brinkac L.M."/>
            <person name="Beanan M.J."/>
            <person name="Dodson R.J."/>
            <person name="Daugherty S.C."/>
            <person name="Madupu R."/>
            <person name="Angiuoli S.V."/>
            <person name="Durkin A.S."/>
            <person name="Haft D.H."/>
            <person name="Vamathevan J.J."/>
            <person name="Khouri H."/>
            <person name="Utterback T.R."/>
            <person name="Lee C."/>
            <person name="Dimitrov G."/>
            <person name="Jiang L."/>
            <person name="Qin H."/>
            <person name="Weidman J."/>
            <person name="Tran K."/>
            <person name="Kang K.H."/>
            <person name="Hance I.R."/>
            <person name="Nelson K.E."/>
            <person name="Fraser C.M."/>
        </authorList>
    </citation>
    <scope>NUCLEOTIDE SEQUENCE [LARGE SCALE GENOMIC DNA]</scope>
    <source>
        <strain>COL</strain>
    </source>
</reference>
<sequence length="984" mass="111244">MQEHLVVTLDGKDYLVEPGTNLLEFIKSQDTFVPSICYNESMGPIQTCDTCTVEIDGKIERSCSTVIDRPMTVNTVNNDVKDAQKEALDRILEKHMLYCTVCDYNNGDCEIHNTMDAWGLQHQTYEYKEKPYEKDYGPFYRYDPNQCILCGRCVEACQDIEVNETIRIDWDREHPRVIWDNDVPINESSCVSCGQCATVCPCNAMMEVNMEGNAGYMTDTEPGSLAAMIDLTKKAEPGYGPLFAISDSEAEMRKERIKKTKTVCTYCGVGCSFEVWTKDREILKVQPSHDSPANKIATCVKGKFSWGHINSDQRLTKPLVRKNGEFHEVEWDEALNVIADNFTAIKEKHGPDALSFISSSKATNEESYLMQKLARQVIGTNNVDNCSRYCQAPATKGLFRTVGHGGDSGSIEDLEKAAMSVLIGTNTAEAHPVIASRMKRAQKLFGQKIHVFDIRKHEMAERADRFYQPKPGTDLAWLSAVTKYIIDHDLHDKAFIDEWVDDFDEYYKSLETFTMAFAEEATGIPESELIKFAEECAKAESVVICWAMGITQQDIGSDSSTAISNLLLVTGNYRRPGTGAYPLRGHNNVQGCSDMGSMPDKITGYQSIEADDIRAKFEKEYGVKLNPKAGKDNHEMVEGIHDGEVHSLYLYGEDTGIVDSNINFVQAAFEKLDFMVVQDEFLTFTATYADVVLPASPSLEKDGTFTNTERRIQRLYQALEPLGDSKPDWKIFQAIANRLGFDWNYKHPSEIMDEVARLTPLYAGVSYDRLEGFNSLQWPVQPDGTDEPILYLEGFNFDNGKAKLFPLSFDNYFKQDEIYDIHVNNGRLLEHFHEGNMTYQTPMIKYKVPRAFVEISPELAEDRGIHEGAEVKLISETGEAVLQVHVTDRVKGKEIYIPLNNDAMENGDLGAINLLTNSDVDQYTDTPSYKRTSCRLEVITKRGKSPLNPNNFRVNKKRQPQYSVQVQKKWERSDYVFPGNQVDK</sequence>
<proteinExistence type="inferred from homology"/>
<protein>
    <recommendedName>
        <fullName>Putative formate dehydrogenase SACOL2301</fullName>
        <ecNumber>1.17.1.9</ecNumber>
    </recommendedName>
</protein>
<organism>
    <name type="scientific">Staphylococcus aureus (strain COL)</name>
    <dbReference type="NCBI Taxonomy" id="93062"/>
    <lineage>
        <taxon>Bacteria</taxon>
        <taxon>Bacillati</taxon>
        <taxon>Bacillota</taxon>
        <taxon>Bacilli</taxon>
        <taxon>Bacillales</taxon>
        <taxon>Staphylococcaceae</taxon>
        <taxon>Staphylococcus</taxon>
    </lineage>
</organism>
<gene>
    <name type="ordered locus">SACOL2301</name>
</gene>
<keyword id="KW-0001">2Fe-2S</keyword>
<keyword id="KW-0004">4Fe-4S</keyword>
<keyword id="KW-0408">Iron</keyword>
<keyword id="KW-0411">Iron-sulfur</keyword>
<keyword id="KW-0479">Metal-binding</keyword>
<keyword id="KW-0500">Molybdenum</keyword>
<keyword id="KW-0520">NAD</keyword>
<keyword id="KW-0560">Oxidoreductase</keyword>
<keyword id="KW-0677">Repeat</keyword>
<comment type="catalytic activity">
    <reaction>
        <text>formate + NAD(+) = CO2 + NADH</text>
        <dbReference type="Rhea" id="RHEA:15985"/>
        <dbReference type="ChEBI" id="CHEBI:15740"/>
        <dbReference type="ChEBI" id="CHEBI:16526"/>
        <dbReference type="ChEBI" id="CHEBI:57540"/>
        <dbReference type="ChEBI" id="CHEBI:57945"/>
        <dbReference type="EC" id="1.17.1.9"/>
    </reaction>
</comment>
<comment type="cofactor">
    <cofactor evidence="1">
        <name>[2Fe-2S] cluster</name>
        <dbReference type="ChEBI" id="CHEBI:190135"/>
    </cofactor>
    <text evidence="1">Binds 1 [2Fe-2S] cluster.</text>
</comment>
<comment type="cofactor">
    <cofactor evidence="1">
        <name>[4Fe-4S] cluster</name>
        <dbReference type="ChEBI" id="CHEBI:49883"/>
    </cofactor>
    <text evidence="1">Binds 4 [4Fe-4S] clusters.</text>
</comment>
<comment type="cofactor">
    <cofactor evidence="1">
        <name>Mo-bis(molybdopterin guanine dinucleotide)</name>
        <dbReference type="ChEBI" id="CHEBI:60539"/>
    </cofactor>
    <text evidence="1">Binds 1 molybdenum-bis(molybdopterin guanine dinucleotide) (Mo-bis-MGD) cofactor per subunit.</text>
</comment>
<comment type="similarity">
    <text evidence="6">In the C-terminal section; belongs to the prokaryotic molybdopterin-containing oxidoreductase family.</text>
</comment>
<evidence type="ECO:0000250" key="1"/>
<evidence type="ECO:0000255" key="2">
    <source>
        <dbReference type="PROSITE-ProRule" id="PRU00465"/>
    </source>
</evidence>
<evidence type="ECO:0000255" key="3">
    <source>
        <dbReference type="PROSITE-ProRule" id="PRU00711"/>
    </source>
</evidence>
<evidence type="ECO:0000255" key="4">
    <source>
        <dbReference type="PROSITE-ProRule" id="PRU01004"/>
    </source>
</evidence>
<evidence type="ECO:0000255" key="5">
    <source>
        <dbReference type="PROSITE-ProRule" id="PRU01184"/>
    </source>
</evidence>
<evidence type="ECO:0000305" key="6"/>
<name>FDHL_STAAC</name>
<feature type="chain" id="PRO_0000304129" description="Putative formate dehydrogenase SACOL2301">
    <location>
        <begin position="1"/>
        <end position="984"/>
    </location>
</feature>
<feature type="domain" description="2Fe-2S ferredoxin-type" evidence="2">
    <location>
        <begin position="3"/>
        <end position="79"/>
    </location>
</feature>
<feature type="domain" description="4Fe-4S His(Cys)3-ligated-type" evidence="5">
    <location>
        <begin position="79"/>
        <end position="119"/>
    </location>
</feature>
<feature type="domain" description="4Fe-4S ferredoxin-type 1" evidence="3">
    <location>
        <begin position="138"/>
        <end position="165"/>
    </location>
</feature>
<feature type="domain" description="4Fe-4S ferredoxin-type 2" evidence="3">
    <location>
        <begin position="181"/>
        <end position="211"/>
    </location>
</feature>
<feature type="domain" description="4Fe-4S Mo/W bis-MGD-type" evidence="4">
    <location>
        <begin position="257"/>
        <end position="313"/>
    </location>
</feature>
<feature type="region of interest" description="Formate dehydrogenase">
    <location>
        <begin position="252"/>
        <end position="984"/>
    </location>
</feature>
<feature type="binding site" evidence="1">
    <location>
        <position position="37"/>
    </location>
    <ligand>
        <name>[2Fe-2S] cluster</name>
        <dbReference type="ChEBI" id="CHEBI:190135"/>
    </ligand>
</feature>
<feature type="binding site" evidence="1">
    <location>
        <position position="48"/>
    </location>
    <ligand>
        <name>[2Fe-2S] cluster</name>
        <dbReference type="ChEBI" id="CHEBI:190135"/>
    </ligand>
</feature>
<feature type="binding site" evidence="1">
    <location>
        <position position="51"/>
    </location>
    <ligand>
        <name>[2Fe-2S] cluster</name>
        <dbReference type="ChEBI" id="CHEBI:190135"/>
    </ligand>
</feature>
<feature type="binding site" evidence="1">
    <location>
        <position position="63"/>
    </location>
    <ligand>
        <name>[2Fe-2S] cluster</name>
        <dbReference type="ChEBI" id="CHEBI:190135"/>
    </ligand>
</feature>
<feature type="binding site" evidence="5">
    <location>
        <position position="95"/>
    </location>
    <ligand>
        <name>[4Fe-4S] cluster</name>
        <dbReference type="ChEBI" id="CHEBI:49883"/>
        <label>1</label>
    </ligand>
</feature>
<feature type="binding site" evidence="5">
    <location>
        <position position="99"/>
    </location>
    <ligand>
        <name>[4Fe-4S] cluster</name>
        <dbReference type="ChEBI" id="CHEBI:49883"/>
        <label>1</label>
    </ligand>
</feature>
<feature type="binding site" evidence="5">
    <location>
        <position position="102"/>
    </location>
    <ligand>
        <name>[4Fe-4S] cluster</name>
        <dbReference type="ChEBI" id="CHEBI:49883"/>
        <label>1</label>
    </ligand>
</feature>
<feature type="binding site" evidence="5">
    <location>
        <position position="109"/>
    </location>
    <ligand>
        <name>[4Fe-4S] cluster</name>
        <dbReference type="ChEBI" id="CHEBI:49883"/>
        <label>1</label>
    </ligand>
</feature>
<feature type="binding site" evidence="1">
    <location>
        <position position="147"/>
    </location>
    <ligand>
        <name>[4Fe-4S] cluster</name>
        <dbReference type="ChEBI" id="CHEBI:49883"/>
        <label>2</label>
    </ligand>
</feature>
<feature type="binding site" evidence="1">
    <location>
        <position position="150"/>
    </location>
    <ligand>
        <name>[4Fe-4S] cluster</name>
        <dbReference type="ChEBI" id="CHEBI:49883"/>
        <label>2</label>
    </ligand>
</feature>
<feature type="binding site" evidence="1">
    <location>
        <position position="153"/>
    </location>
    <ligand>
        <name>[4Fe-4S] cluster</name>
        <dbReference type="ChEBI" id="CHEBI:49883"/>
        <label>2</label>
    </ligand>
</feature>
<feature type="binding site" evidence="1">
    <location>
        <position position="157"/>
    </location>
    <ligand>
        <name>[4Fe-4S] cluster</name>
        <dbReference type="ChEBI" id="CHEBI:49883"/>
        <label>3</label>
    </ligand>
</feature>
<feature type="binding site" evidence="1">
    <location>
        <position position="190"/>
    </location>
    <ligand>
        <name>[4Fe-4S] cluster</name>
        <dbReference type="ChEBI" id="CHEBI:49883"/>
        <label>3</label>
    </ligand>
</feature>
<feature type="binding site" evidence="1">
    <location>
        <position position="193"/>
    </location>
    <ligand>
        <name>[4Fe-4S] cluster</name>
        <dbReference type="ChEBI" id="CHEBI:49883"/>
        <label>3</label>
    </ligand>
</feature>
<feature type="binding site" evidence="1">
    <location>
        <position position="196"/>
    </location>
    <ligand>
        <name>[4Fe-4S] cluster</name>
        <dbReference type="ChEBI" id="CHEBI:49883"/>
        <label>3</label>
    </ligand>
</feature>
<feature type="binding site" evidence="1">
    <location>
        <position position="200"/>
    </location>
    <ligand>
        <name>[4Fe-4S] cluster</name>
        <dbReference type="ChEBI" id="CHEBI:49883"/>
        <label>2</label>
    </ligand>
</feature>
<feature type="binding site" evidence="1">
    <location>
        <position position="264"/>
    </location>
    <ligand>
        <name>[4Fe-4S] cluster</name>
        <dbReference type="ChEBI" id="CHEBI:49883"/>
        <label>4</label>
    </ligand>
</feature>
<feature type="binding site" evidence="1">
    <location>
        <position position="267"/>
    </location>
    <ligand>
        <name>[4Fe-4S] cluster</name>
        <dbReference type="ChEBI" id="CHEBI:49883"/>
        <label>4</label>
    </ligand>
</feature>
<feature type="binding site" evidence="1">
    <location>
        <position position="271"/>
    </location>
    <ligand>
        <name>[4Fe-4S] cluster</name>
        <dbReference type="ChEBI" id="CHEBI:49883"/>
        <label>4</label>
    </ligand>
</feature>
<feature type="binding site" evidence="1">
    <location>
        <position position="299"/>
    </location>
    <ligand>
        <name>[4Fe-4S] cluster</name>
        <dbReference type="ChEBI" id="CHEBI:49883"/>
        <label>4</label>
    </ligand>
</feature>